<accession>P89455</accession>
<protein>
    <recommendedName>
        <fullName>Packaging protein UL32</fullName>
    </recommendedName>
</protein>
<name>UL32_HHV2H</name>
<organism>
    <name type="scientific">Human herpesvirus 2 (strain HG52)</name>
    <name type="common">HHV-2</name>
    <name type="synonym">Human herpes simplex virus 2</name>
    <dbReference type="NCBI Taxonomy" id="10315"/>
    <lineage>
        <taxon>Viruses</taxon>
        <taxon>Duplodnaviria</taxon>
        <taxon>Heunggongvirae</taxon>
        <taxon>Peploviricota</taxon>
        <taxon>Herviviricetes</taxon>
        <taxon>Herpesvirales</taxon>
        <taxon>Orthoherpesviridae</taxon>
        <taxon>Alphaherpesvirinae</taxon>
        <taxon>Simplexvirus</taxon>
        <taxon>Simplexvirus humanalpha2</taxon>
        <taxon>Human herpesvirus 2</taxon>
    </lineage>
</organism>
<comment type="function">
    <text evidence="1">Plays a role in efficient localization of neo-synthesized capsids to nuclear replication compartments, thereby controlling cleavage and packaging of virus genomic DNA.</text>
</comment>
<comment type="subcellular location">
    <subcellularLocation>
        <location>Host cytoplasm</location>
    </subcellularLocation>
    <subcellularLocation>
        <location evidence="1">Host nucleus</location>
    </subcellularLocation>
</comment>
<comment type="similarity">
    <text evidence="4">Belongs to the herpesviridae UL32 protein family.</text>
</comment>
<dbReference type="EMBL" id="Z86099">
    <property type="protein sequence ID" value="CAB06757.1"/>
    <property type="molecule type" value="Genomic_DNA"/>
</dbReference>
<dbReference type="SMR" id="P89455"/>
<dbReference type="Proteomes" id="UP000001874">
    <property type="component" value="Segment"/>
</dbReference>
<dbReference type="GO" id="GO:0030430">
    <property type="term" value="C:host cell cytoplasm"/>
    <property type="evidence" value="ECO:0007669"/>
    <property type="project" value="UniProtKB-SubCell"/>
</dbReference>
<dbReference type="GO" id="GO:0042025">
    <property type="term" value="C:host cell nucleus"/>
    <property type="evidence" value="ECO:0007669"/>
    <property type="project" value="UniProtKB-SubCell"/>
</dbReference>
<dbReference type="GO" id="GO:0019031">
    <property type="term" value="C:viral envelope"/>
    <property type="evidence" value="ECO:0007669"/>
    <property type="project" value="InterPro"/>
</dbReference>
<dbReference type="GO" id="GO:0008270">
    <property type="term" value="F:zinc ion binding"/>
    <property type="evidence" value="ECO:0007669"/>
    <property type="project" value="UniProtKB-KW"/>
</dbReference>
<dbReference type="InterPro" id="IPR002597">
    <property type="entry name" value="Herpes_env"/>
</dbReference>
<dbReference type="Pfam" id="PF01673">
    <property type="entry name" value="Herpes_env"/>
    <property type="match status" value="1"/>
</dbReference>
<dbReference type="PROSITE" id="PS51988">
    <property type="entry name" value="HERPESVIRUS_UL32"/>
    <property type="match status" value="1"/>
</dbReference>
<gene>
    <name type="primary">UL32</name>
</gene>
<feature type="chain" id="PRO_0000406180" description="Packaging protein UL32">
    <location>
        <begin position="1"/>
        <end position="598"/>
    </location>
</feature>
<feature type="region of interest" description="Disordered" evidence="3">
    <location>
        <begin position="1"/>
        <end position="23"/>
    </location>
</feature>
<feature type="region of interest" description="Disordered" evidence="3">
    <location>
        <begin position="66"/>
        <end position="107"/>
    </location>
</feature>
<feature type="region of interest" description="Zinc finger 1" evidence="2">
    <location>
        <begin position="128"/>
        <end position="214"/>
    </location>
</feature>
<feature type="region of interest" description="Zinc finger 3" evidence="2">
    <location>
        <begin position="310"/>
        <end position="583"/>
    </location>
</feature>
<feature type="region of interest" description="Zinc finger 2" evidence="2">
    <location>
        <begin position="425"/>
        <end position="504"/>
    </location>
</feature>
<feature type="binding site" evidence="2">
    <location>
        <position position="128"/>
    </location>
    <ligand>
        <name>Zn(2+)</name>
        <dbReference type="ChEBI" id="CHEBI:29105"/>
        <label>1</label>
    </ligand>
</feature>
<feature type="binding site" evidence="2">
    <location>
        <position position="131"/>
    </location>
    <ligand>
        <name>Zn(2+)</name>
        <dbReference type="ChEBI" id="CHEBI:29105"/>
        <label>1</label>
    </ligand>
</feature>
<feature type="binding site" evidence="2">
    <location>
        <position position="208"/>
    </location>
    <ligand>
        <name>Zn(2+)</name>
        <dbReference type="ChEBI" id="CHEBI:29105"/>
        <label>1</label>
    </ligand>
</feature>
<feature type="binding site" evidence="2">
    <location>
        <position position="214"/>
    </location>
    <ligand>
        <name>Zn(2+)</name>
        <dbReference type="ChEBI" id="CHEBI:29105"/>
        <label>1</label>
    </ligand>
</feature>
<feature type="binding site" evidence="2">
    <location>
        <position position="310"/>
    </location>
    <ligand>
        <name>Zn(2+)</name>
        <dbReference type="ChEBI" id="CHEBI:29105"/>
        <label>3</label>
    </ligand>
</feature>
<feature type="binding site" evidence="2">
    <location>
        <position position="311"/>
    </location>
    <ligand>
        <name>Zn(2+)</name>
        <dbReference type="ChEBI" id="CHEBI:29105"/>
        <label>3</label>
    </ligand>
</feature>
<feature type="binding site" evidence="2">
    <location>
        <position position="425"/>
    </location>
    <ligand>
        <name>Zn(2+)</name>
        <dbReference type="ChEBI" id="CHEBI:29105"/>
        <label>2</label>
    </ligand>
</feature>
<feature type="binding site" evidence="2">
    <location>
        <position position="428"/>
    </location>
    <ligand>
        <name>Zn(2+)</name>
        <dbReference type="ChEBI" id="CHEBI:29105"/>
        <label>2</label>
    </ligand>
</feature>
<feature type="binding site" evidence="2">
    <location>
        <position position="497"/>
    </location>
    <ligand>
        <name>Zn(2+)</name>
        <dbReference type="ChEBI" id="CHEBI:29105"/>
        <label>2</label>
    </ligand>
</feature>
<feature type="binding site" evidence="2">
    <location>
        <position position="504"/>
    </location>
    <ligand>
        <name>Zn(2+)</name>
        <dbReference type="ChEBI" id="CHEBI:29105"/>
        <label>2</label>
    </ligand>
</feature>
<feature type="binding site" evidence="2">
    <location>
        <position position="546"/>
    </location>
    <ligand>
        <name>Zn(2+)</name>
        <dbReference type="ChEBI" id="CHEBI:29105"/>
        <label>3</label>
    </ligand>
</feature>
<feature type="binding site" evidence="2">
    <location>
        <position position="583"/>
    </location>
    <ligand>
        <name>Zn(2+)</name>
        <dbReference type="ChEBI" id="CHEBI:29105"/>
        <label>3</label>
    </ligand>
</feature>
<organismHost>
    <name type="scientific">Homo sapiens</name>
    <name type="common">Human</name>
    <dbReference type="NCBI Taxonomy" id="9606"/>
</organismHost>
<reference key="1">
    <citation type="journal article" date="1991" name="J. Gen. Virol.">
        <title>Comparative sequence analysis of the long repeat regions and adjoining parts of the long unique regions in the genomes of herpes simplex viruses types 1 and 2.</title>
        <authorList>
            <person name="McGeoch D.J."/>
            <person name="Cunningham C."/>
            <person name="McIntyre G."/>
            <person name="Dolan A."/>
        </authorList>
    </citation>
    <scope>NUCLEOTIDE SEQUENCE [LARGE SCALE GENOMIC DNA]</scope>
</reference>
<keyword id="KW-1035">Host cytoplasm</keyword>
<keyword id="KW-1048">Host nucleus</keyword>
<keyword id="KW-0479">Metal-binding</keyword>
<keyword id="KW-1185">Reference proteome</keyword>
<keyword id="KW-0862">Zinc</keyword>
<keyword id="KW-0863">Zinc-finger</keyword>
<sequence length="598" mass="64020">MATSAPGVPSSAAVREESPGSSWKEGAFERPYVAFDPDLLALNEALCAELLAACHVVGVPPASALDEDVESDVAPAPPRPRGAAREASGGRGPGSARGPPADPTAEGLLDTGPFAAASVDTFALDRPCLVCRTIELYKQAYRLSPQWVADYAFLCAKCLGAPHCAASIFVAAFEFVYVMDHHFLRTKKATLVGSFARFALTINDIHRHFFLHCCFRTDGGVPGRHAQKQPRPTPSPGAAKVQYSNYSFLAQSATRALIGTLASGGDDGAGAGAGGGSGTQPSLTTALMNWKDCARLLDCTEGKRGGGDSCCTRAAARNGEFEAAAGALAQGGEPETWAYADLILLLLAGTPAVWESGPRLRAAADARRAAVSESWEAHRGARMRDAAPRFAQFAEPQPQPDLDLGPLMATVLKHGRGRGRTGGECLLCNLLLVRAYWLAMRRLRASVVRYSENNTSLFDCIVPVVDQLEADPEAQPGDGGRFVSLLRAAGPEAIFKHMFCDPMCAITEMEVDPWVLFGHPRADHRDELQLHKAKLACGNEFEGRVCIALRALIYTFKTYQVFVPKPTALATFVREAGALLRRHSISLLSLEHTLCTYV</sequence>
<proteinExistence type="inferred from homology"/>
<evidence type="ECO:0000250" key="1"/>
<evidence type="ECO:0000255" key="2">
    <source>
        <dbReference type="PROSITE-ProRule" id="PRU01332"/>
    </source>
</evidence>
<evidence type="ECO:0000256" key="3">
    <source>
        <dbReference type="SAM" id="MobiDB-lite"/>
    </source>
</evidence>
<evidence type="ECO:0000305" key="4"/>